<evidence type="ECO:0000250" key="1"/>
<evidence type="ECO:0000250" key="2">
    <source>
        <dbReference type="UniProtKB" id="Q9BVW5"/>
    </source>
</evidence>
<evidence type="ECO:0000256" key="3">
    <source>
        <dbReference type="SAM" id="MobiDB-lite"/>
    </source>
</evidence>
<evidence type="ECO:0000305" key="4"/>
<name>TIPIN_XENLA</name>
<comment type="function">
    <text evidence="1">Plays an important role in the control of DNA replication and the maintenance of replication fork stability. Important for cell survival after DNA damage or replication stress. May be required for the replication checkpoint induced by hydroxyurea or ultraviolet light (By similarity).</text>
</comment>
<comment type="subunit">
    <text evidence="1">Interacts with timeless, which impairs timeless self-association.</text>
</comment>
<comment type="interaction">
    <interactant intactId="EBI-7570880">
        <id>Q0IHI4</id>
    </interactant>
    <interactant intactId="EBI-3645423">
        <id>Q9DE46</id>
        <label>pola1</label>
    </interactant>
    <organismsDiffer>false</organismsDiffer>
    <experiments>3</experiments>
</comment>
<comment type="interaction">
    <interactant intactId="EBI-7570880">
        <id>Q0IHI4</id>
    </interactant>
    <interactant intactId="EBI-3510652">
        <id>O13046</id>
        <label>wdhd1</label>
    </interactant>
    <organismsDiffer>false</organismsDiffer>
    <experiments>5</experiments>
</comment>
<comment type="interaction">
    <interactant intactId="EBI-7570880">
        <id>Q0IHI4</id>
    </interactant>
    <interactant intactId="EBI-15657607">
        <id>Q3LGB9</id>
        <label>XTim1</label>
    </interactant>
    <organismsDiffer>false</organismsDiffer>
    <experiments>2</experiments>
</comment>
<comment type="subcellular location">
    <subcellularLocation>
        <location evidence="2">Cytoplasm</location>
    </subcellularLocation>
    <subcellularLocation>
        <location evidence="2">Nucleus</location>
    </subcellularLocation>
</comment>
<comment type="similarity">
    <text evidence="4">Belongs to the CSM3 family.</text>
</comment>
<dbReference type="EMBL" id="AB208777">
    <property type="protein sequence ID" value="BAE45345.1"/>
    <property type="molecule type" value="mRNA"/>
</dbReference>
<dbReference type="EMBL" id="BC123142">
    <property type="protein sequence ID" value="AAI23143.1"/>
    <property type="molecule type" value="mRNA"/>
</dbReference>
<dbReference type="RefSeq" id="NP_001081090.1">
    <property type="nucleotide sequence ID" value="NM_001087621.1"/>
</dbReference>
<dbReference type="SMR" id="Q0IHI4"/>
<dbReference type="DIP" id="DIP-46439N"/>
<dbReference type="IntAct" id="Q0IHI4">
    <property type="interactions" value="4"/>
</dbReference>
<dbReference type="MINT" id="Q0IHI4"/>
<dbReference type="DNASU" id="394376"/>
<dbReference type="GeneID" id="394376"/>
<dbReference type="KEGG" id="xla:394376"/>
<dbReference type="AGR" id="Xenbase:XB-GENE-17340911"/>
<dbReference type="CTD" id="394376"/>
<dbReference type="Xenbase" id="XB-GENE-17340911">
    <property type="gene designation" value="tipin.L"/>
</dbReference>
<dbReference type="OrthoDB" id="437078at2759"/>
<dbReference type="Proteomes" id="UP000186698">
    <property type="component" value="Chromosome 3L"/>
</dbReference>
<dbReference type="Bgee" id="394376">
    <property type="expression patterns" value="Expressed in egg cell and 19 other cell types or tissues"/>
</dbReference>
<dbReference type="GO" id="GO:0000785">
    <property type="term" value="C:chromatin"/>
    <property type="evidence" value="ECO:0000250"/>
    <property type="project" value="UniProtKB"/>
</dbReference>
<dbReference type="GO" id="GO:0005737">
    <property type="term" value="C:cytoplasm"/>
    <property type="evidence" value="ECO:0007669"/>
    <property type="project" value="UniProtKB-SubCell"/>
</dbReference>
<dbReference type="GO" id="GO:0005634">
    <property type="term" value="C:nucleus"/>
    <property type="evidence" value="ECO:0000250"/>
    <property type="project" value="UniProtKB"/>
</dbReference>
<dbReference type="GO" id="GO:0031298">
    <property type="term" value="C:replication fork protection complex"/>
    <property type="evidence" value="ECO:0000318"/>
    <property type="project" value="GO_Central"/>
</dbReference>
<dbReference type="GO" id="GO:0003677">
    <property type="term" value="F:DNA binding"/>
    <property type="evidence" value="ECO:0000318"/>
    <property type="project" value="GO_Central"/>
</dbReference>
<dbReference type="GO" id="GO:0044770">
    <property type="term" value="P:cell cycle phase transition"/>
    <property type="evidence" value="ECO:0000250"/>
    <property type="project" value="UniProtKB"/>
</dbReference>
<dbReference type="GO" id="GO:0051301">
    <property type="term" value="P:cell division"/>
    <property type="evidence" value="ECO:0007669"/>
    <property type="project" value="UniProtKB-KW"/>
</dbReference>
<dbReference type="GO" id="GO:0000076">
    <property type="term" value="P:DNA replication checkpoint signaling"/>
    <property type="evidence" value="ECO:0000250"/>
    <property type="project" value="UniProtKB"/>
</dbReference>
<dbReference type="GO" id="GO:0031573">
    <property type="term" value="P:mitotic intra-S DNA damage checkpoint signaling"/>
    <property type="evidence" value="ECO:0000250"/>
    <property type="project" value="UniProtKB"/>
</dbReference>
<dbReference type="GO" id="GO:0008284">
    <property type="term" value="P:positive regulation of cell population proliferation"/>
    <property type="evidence" value="ECO:0000250"/>
    <property type="project" value="UniProtKB"/>
</dbReference>
<dbReference type="GO" id="GO:0043111">
    <property type="term" value="P:replication fork arrest"/>
    <property type="evidence" value="ECO:0000318"/>
    <property type="project" value="GO_Central"/>
</dbReference>
<dbReference type="GO" id="GO:0031297">
    <property type="term" value="P:replication fork processing"/>
    <property type="evidence" value="ECO:0007669"/>
    <property type="project" value="InterPro"/>
</dbReference>
<dbReference type="InterPro" id="IPR012923">
    <property type="entry name" value="Csm3"/>
</dbReference>
<dbReference type="InterPro" id="IPR040038">
    <property type="entry name" value="TIPIN/Csm3/Swi3"/>
</dbReference>
<dbReference type="PANTHER" id="PTHR13220">
    <property type="entry name" value="TIMELESS INTERACTING-RELATED"/>
    <property type="match status" value="1"/>
</dbReference>
<dbReference type="PANTHER" id="PTHR13220:SF11">
    <property type="entry name" value="TIMELESS-INTERACTING PROTEIN"/>
    <property type="match status" value="1"/>
</dbReference>
<dbReference type="Pfam" id="PF07962">
    <property type="entry name" value="Swi3"/>
    <property type="match status" value="1"/>
</dbReference>
<sequence>MMDPLDNGLFDLPDYEHTEDENFPPLPPPHSPGADDEAEDVANGDDWTENAGQTQREEAPKPARRVVKRPQPKLDGQRLASQRGLPALRHMFDDVKFKGKGHETEDLKILLRQMENWAHRLFPKLQFEDFLNRLESMGNKKEVQTCLKKIRMDLPIVHDDFLSEEVVVQTEDHAIDMPSEDFSFPDELHVPSPSQPVKVDLSEETLQRIERNRRLALERRMEKMQAQAESQALSQATQSDPNEIPDDAFDAEMLDAVESMTGIPTASQSPPHVDKDLSLVLHSHDLPVQDVSQSPAPCPKPQGDAPPEKALSLVHSALPSTSDPTSPRKPLTEQLPDDADTSSATPYTEAPACTNTKEEY</sequence>
<accession>Q0IHI4</accession>
<accession>Q3LGB8</accession>
<feature type="chain" id="PRO_0000305258" description="TIMELESS-interacting protein">
    <location>
        <begin position="1"/>
        <end position="360"/>
    </location>
</feature>
<feature type="region of interest" description="Disordered" evidence="3">
    <location>
        <begin position="1"/>
        <end position="80"/>
    </location>
</feature>
<feature type="region of interest" description="Interaction with TIMELESS" evidence="1">
    <location>
        <begin position="74"/>
        <end position="150"/>
    </location>
</feature>
<feature type="region of interest" description="Disordered" evidence="3">
    <location>
        <begin position="178"/>
        <end position="199"/>
    </location>
</feature>
<feature type="region of interest" description="Disordered" evidence="3">
    <location>
        <begin position="220"/>
        <end position="246"/>
    </location>
</feature>
<feature type="region of interest" description="Disordered" evidence="3">
    <location>
        <begin position="289"/>
        <end position="360"/>
    </location>
</feature>
<feature type="compositionally biased region" description="Acidic residues" evidence="3">
    <location>
        <begin position="34"/>
        <end position="48"/>
    </location>
</feature>
<feature type="compositionally biased region" description="Basic residues" evidence="3">
    <location>
        <begin position="62"/>
        <end position="71"/>
    </location>
</feature>
<feature type="compositionally biased region" description="Low complexity" evidence="3">
    <location>
        <begin position="225"/>
        <end position="239"/>
    </location>
</feature>
<feature type="sequence conflict" description="In Ref. 2; BAE45345." evidence="4" ref="2">
    <original>E</original>
    <variation>D</variation>
    <location>
        <position position="39"/>
    </location>
</feature>
<feature type="sequence conflict" description="In Ref. 2; BAE45345." evidence="4" ref="2">
    <original>P</original>
    <variation>S</variation>
    <location>
        <position position="307"/>
    </location>
</feature>
<feature type="sequence conflict" description="In Ref. 2; BAE45345." evidence="4" ref="2">
    <original>D</original>
    <variation>DDS</variation>
    <location>
        <position position="337"/>
    </location>
</feature>
<feature type="sequence conflict" description="In Ref. 2; BAE45345." evidence="4" ref="2">
    <original>T</original>
    <variation>A</variation>
    <location>
        <position position="354"/>
    </location>
</feature>
<protein>
    <recommendedName>
        <fullName>TIMELESS-interacting protein</fullName>
    </recommendedName>
    <alternativeName>
        <fullName>XTipin</fullName>
    </alternativeName>
</protein>
<proteinExistence type="evidence at protein level"/>
<organism>
    <name type="scientific">Xenopus laevis</name>
    <name type="common">African clawed frog</name>
    <dbReference type="NCBI Taxonomy" id="8355"/>
    <lineage>
        <taxon>Eukaryota</taxon>
        <taxon>Metazoa</taxon>
        <taxon>Chordata</taxon>
        <taxon>Craniata</taxon>
        <taxon>Vertebrata</taxon>
        <taxon>Euteleostomi</taxon>
        <taxon>Amphibia</taxon>
        <taxon>Batrachia</taxon>
        <taxon>Anura</taxon>
        <taxon>Pipoidea</taxon>
        <taxon>Pipidae</taxon>
        <taxon>Xenopodinae</taxon>
        <taxon>Xenopus</taxon>
        <taxon>Xenopus</taxon>
    </lineage>
</organism>
<keyword id="KW-0131">Cell cycle</keyword>
<keyword id="KW-0132">Cell division</keyword>
<keyword id="KW-0963">Cytoplasm</keyword>
<keyword id="KW-0227">DNA damage</keyword>
<keyword id="KW-0498">Mitosis</keyword>
<keyword id="KW-0539">Nucleus</keyword>
<keyword id="KW-1185">Reference proteome</keyword>
<reference key="1">
    <citation type="submission" date="2005-03" db="EMBL/GenBank/DDBJ databases">
        <title>Xenopus Tim1 and Tipin are required for stable association of Claspin/Mrc1 with replication forks.</title>
        <authorList>
            <person name="Tsujimura T."/>
            <person name="Hashimoto H."/>
            <person name="Takisawa H."/>
        </authorList>
    </citation>
    <scope>NUCLEOTIDE SEQUENCE [MRNA]</scope>
</reference>
<reference key="2">
    <citation type="submission" date="2006-09" db="EMBL/GenBank/DDBJ databases">
        <authorList>
            <consortium name="NIH - Xenopus Gene Collection (XGC) project"/>
        </authorList>
    </citation>
    <scope>NUCLEOTIDE SEQUENCE [LARGE SCALE MRNA]</scope>
    <source>
        <tissue>Testis</tissue>
    </source>
</reference>
<gene>
    <name type="primary">tipin</name>
</gene>